<sequence>MAKDAGLIEANGELKVFIDQNLSPGKGVVSLVAVHPSTVNSLGKQLLPKTFGQSNVNITQQVVIGTPQRPAAPNTIVVGSPHTPNTHFVSQNQPSDPSPWSAGKRNRKGEKNGKGLRHFSMKVCEKVQRKGTTSYNEVADELVAEFSAADSHILPSESAYDQKNIRRRVYDALNVLMAMNIISKEKKEIKWIGLPTNSAQECQSLEVERQRRLERIKQKQSQLQELILQQIAFKNLVQRNRQVEQQASRPPPPNSVIHLPFIIVNTSKKTVIDCSISNDKFEYLFNFDNTFEIHDDIEVLKRMGMACGLESGSCSPEDLRVARSLVPKALEPYVTEMAQGSLGGVFVASAVSTSNGTRLSASDLANGADGALATSSSGSQYSGSRVETPVSCVGEDDEDDEDFNENEEED</sequence>
<feature type="chain" id="PRO_0000305939" description="Transcription factor Dp-1">
    <location>
        <begin position="1"/>
        <end position="410"/>
    </location>
</feature>
<feature type="DNA-binding region" evidence="3">
    <location>
        <begin position="113"/>
        <end position="195"/>
    </location>
</feature>
<feature type="region of interest" description="Disordered" evidence="4">
    <location>
        <begin position="77"/>
        <end position="114"/>
    </location>
</feature>
<feature type="region of interest" description="Interaction with CEBPA" evidence="2">
    <location>
        <begin position="105"/>
        <end position="127"/>
    </location>
</feature>
<feature type="region of interest" description="Dimerization" evidence="3">
    <location>
        <begin position="204"/>
        <end position="277"/>
    </location>
</feature>
<feature type="region of interest" description="Enhances binding of RB protein to E2F">
    <location>
        <begin position="211"/>
        <end position="327"/>
    </location>
</feature>
<feature type="region of interest" description="DCB1">
    <location>
        <begin position="214"/>
        <end position="246"/>
    </location>
</feature>
<feature type="region of interest" description="DCB2">
    <location>
        <begin position="259"/>
        <end position="315"/>
    </location>
</feature>
<feature type="region of interest" description="Disordered" evidence="4">
    <location>
        <begin position="370"/>
        <end position="410"/>
    </location>
</feature>
<feature type="short sequence motif" description="DEF box">
    <location>
        <begin position="161"/>
        <end position="195"/>
    </location>
</feature>
<feature type="compositionally biased region" description="Polar residues" evidence="4">
    <location>
        <begin position="82"/>
        <end position="95"/>
    </location>
</feature>
<feature type="compositionally biased region" description="Basic residues" evidence="4">
    <location>
        <begin position="104"/>
        <end position="114"/>
    </location>
</feature>
<feature type="compositionally biased region" description="Low complexity" evidence="4">
    <location>
        <begin position="375"/>
        <end position="384"/>
    </location>
</feature>
<feature type="compositionally biased region" description="Acidic residues" evidence="4">
    <location>
        <begin position="394"/>
        <end position="410"/>
    </location>
</feature>
<feature type="modified residue" description="N6-acetyllysine" evidence="2">
    <location>
        <position position="3"/>
    </location>
</feature>
<feature type="modified residue" description="Phosphoserine; by CDK2" evidence="2 3">
    <location>
        <position position="23"/>
    </location>
</feature>
<evidence type="ECO:0000250" key="1">
    <source>
        <dbReference type="UniProtKB" id="Q08639"/>
    </source>
</evidence>
<evidence type="ECO:0000250" key="2">
    <source>
        <dbReference type="UniProtKB" id="Q14186"/>
    </source>
</evidence>
<evidence type="ECO:0000255" key="3"/>
<evidence type="ECO:0000256" key="4">
    <source>
        <dbReference type="SAM" id="MobiDB-lite"/>
    </source>
</evidence>
<evidence type="ECO:0000305" key="5"/>
<proteinExistence type="evidence at transcript level"/>
<name>TFDP1_BOVIN</name>
<dbReference type="EMBL" id="BC118103">
    <property type="protein sequence ID" value="AAI18104.1"/>
    <property type="molecule type" value="mRNA"/>
</dbReference>
<dbReference type="RefSeq" id="NP_001069497.1">
    <property type="nucleotide sequence ID" value="NM_001076029.1"/>
</dbReference>
<dbReference type="RefSeq" id="XP_024855673.1">
    <property type="nucleotide sequence ID" value="XM_024999905.2"/>
</dbReference>
<dbReference type="RefSeq" id="XP_024855674.1">
    <property type="nucleotide sequence ID" value="XM_024999906.2"/>
</dbReference>
<dbReference type="RefSeq" id="XP_024855675.1">
    <property type="nucleotide sequence ID" value="XM_024999907.2"/>
</dbReference>
<dbReference type="RefSeq" id="XP_024855676.1">
    <property type="nucleotide sequence ID" value="XM_024999908.2"/>
</dbReference>
<dbReference type="RefSeq" id="XP_059748057.1">
    <property type="nucleotide sequence ID" value="XM_059892074.1"/>
</dbReference>
<dbReference type="RefSeq" id="XP_059748059.1">
    <property type="nucleotide sequence ID" value="XM_059892076.1"/>
</dbReference>
<dbReference type="SMR" id="Q17QZ4"/>
<dbReference type="FunCoup" id="Q17QZ4">
    <property type="interactions" value="3897"/>
</dbReference>
<dbReference type="STRING" id="9913.ENSBTAP00000067273"/>
<dbReference type="PaxDb" id="9913-ENSBTAP00000026175"/>
<dbReference type="Ensembl" id="ENSBTAT00000026175.6">
    <property type="protein sequence ID" value="ENSBTAP00000026175.5"/>
    <property type="gene ID" value="ENSBTAG00000019645.7"/>
</dbReference>
<dbReference type="GeneID" id="534579"/>
<dbReference type="KEGG" id="bta:534579"/>
<dbReference type="CTD" id="7027"/>
<dbReference type="VEuPathDB" id="HostDB:ENSBTAG00000019645"/>
<dbReference type="VGNC" id="VGNC:107256">
    <property type="gene designation" value="TFDP1"/>
</dbReference>
<dbReference type="eggNOG" id="KOG2829">
    <property type="taxonomic scope" value="Eukaryota"/>
</dbReference>
<dbReference type="GeneTree" id="ENSGT00940000154652"/>
<dbReference type="HOGENOM" id="CLU_039874_3_1_1"/>
<dbReference type="InParanoid" id="Q17QZ4"/>
<dbReference type="OMA" id="MSPNDAH"/>
<dbReference type="OrthoDB" id="552115at2759"/>
<dbReference type="TreeFam" id="TF314396"/>
<dbReference type="Reactome" id="R-BTA-1538133">
    <property type="pathway name" value="G0 and Early G1"/>
</dbReference>
<dbReference type="Reactome" id="R-BTA-2173796">
    <property type="pathway name" value="SMAD2/SMAD3:SMAD4 heterotrimer regulates transcription"/>
</dbReference>
<dbReference type="Reactome" id="R-BTA-69231">
    <property type="pathway name" value="Cyclin D associated events in G1"/>
</dbReference>
<dbReference type="Reactome" id="R-BTA-8953750">
    <property type="pathway name" value="Transcriptional Regulation by E2F6"/>
</dbReference>
<dbReference type="Proteomes" id="UP000009136">
    <property type="component" value="Chromosome 12"/>
</dbReference>
<dbReference type="Bgee" id="ENSBTAG00000019645">
    <property type="expression patterns" value="Expressed in retina and 104 other cell types or tissues"/>
</dbReference>
<dbReference type="GO" id="GO:0005737">
    <property type="term" value="C:cytoplasm"/>
    <property type="evidence" value="ECO:0000250"/>
    <property type="project" value="UniProtKB"/>
</dbReference>
<dbReference type="GO" id="GO:0005634">
    <property type="term" value="C:nucleus"/>
    <property type="evidence" value="ECO:0000250"/>
    <property type="project" value="UniProtKB"/>
</dbReference>
<dbReference type="GO" id="GO:0005667">
    <property type="term" value="C:transcription regulator complex"/>
    <property type="evidence" value="ECO:0007669"/>
    <property type="project" value="InterPro"/>
</dbReference>
<dbReference type="GO" id="GO:0003677">
    <property type="term" value="F:DNA binding"/>
    <property type="evidence" value="ECO:0007669"/>
    <property type="project" value="UniProtKB-KW"/>
</dbReference>
<dbReference type="GO" id="GO:0000981">
    <property type="term" value="F:DNA-binding transcription factor activity, RNA polymerase II-specific"/>
    <property type="evidence" value="ECO:0000318"/>
    <property type="project" value="GO_Central"/>
</dbReference>
<dbReference type="GO" id="GO:0070345">
    <property type="term" value="P:negative regulation of fat cell proliferation"/>
    <property type="evidence" value="ECO:0000250"/>
    <property type="project" value="UniProtKB"/>
</dbReference>
<dbReference type="GO" id="GO:0051726">
    <property type="term" value="P:regulation of cell cycle"/>
    <property type="evidence" value="ECO:0007669"/>
    <property type="project" value="InterPro"/>
</dbReference>
<dbReference type="GO" id="GO:0006357">
    <property type="term" value="P:regulation of transcription by RNA polymerase II"/>
    <property type="evidence" value="ECO:0000318"/>
    <property type="project" value="GO_Central"/>
</dbReference>
<dbReference type="CDD" id="cd14458">
    <property type="entry name" value="DP_DD"/>
    <property type="match status" value="1"/>
</dbReference>
<dbReference type="FunFam" id="1.10.10.10:FF:000047">
    <property type="entry name" value="Transcription factor"/>
    <property type="match status" value="1"/>
</dbReference>
<dbReference type="FunFam" id="1.20.140.80:FF:000001">
    <property type="entry name" value="Transcription factor"/>
    <property type="match status" value="1"/>
</dbReference>
<dbReference type="Gene3D" id="1.20.140.80">
    <property type="entry name" value="Transcription factor DP"/>
    <property type="match status" value="1"/>
</dbReference>
<dbReference type="Gene3D" id="1.10.10.10">
    <property type="entry name" value="Winged helix-like DNA-binding domain superfamily/Winged helix DNA-binding domain"/>
    <property type="match status" value="1"/>
</dbReference>
<dbReference type="InterPro" id="IPR037241">
    <property type="entry name" value="E2F-DP_heterodim"/>
</dbReference>
<dbReference type="InterPro" id="IPR003316">
    <property type="entry name" value="E2F_WHTH_DNA-bd_dom"/>
</dbReference>
<dbReference type="InterPro" id="IPR038168">
    <property type="entry name" value="TF_DP_C_sf"/>
</dbReference>
<dbReference type="InterPro" id="IPR014889">
    <property type="entry name" value="Transc_factor_DP_C"/>
</dbReference>
<dbReference type="InterPro" id="IPR015648">
    <property type="entry name" value="Transcrpt_fac_DP"/>
</dbReference>
<dbReference type="InterPro" id="IPR036388">
    <property type="entry name" value="WH-like_DNA-bd_sf"/>
</dbReference>
<dbReference type="InterPro" id="IPR036390">
    <property type="entry name" value="WH_DNA-bd_sf"/>
</dbReference>
<dbReference type="PANTHER" id="PTHR12548">
    <property type="entry name" value="TRANSCRIPTION FACTOR DP"/>
    <property type="match status" value="1"/>
</dbReference>
<dbReference type="PANTHER" id="PTHR12548:SF4">
    <property type="entry name" value="TRANSCRIPTION FACTOR DP-1"/>
    <property type="match status" value="1"/>
</dbReference>
<dbReference type="Pfam" id="PF08781">
    <property type="entry name" value="DP"/>
    <property type="match status" value="1"/>
</dbReference>
<dbReference type="Pfam" id="PF02319">
    <property type="entry name" value="E2F_TDP"/>
    <property type="match status" value="1"/>
</dbReference>
<dbReference type="PIRSF" id="PIRSF009404">
    <property type="entry name" value="Transcription_factor_DP"/>
    <property type="match status" value="1"/>
</dbReference>
<dbReference type="SMART" id="SM01138">
    <property type="entry name" value="DP"/>
    <property type="match status" value="1"/>
</dbReference>
<dbReference type="SMART" id="SM01372">
    <property type="entry name" value="E2F_TDP"/>
    <property type="match status" value="1"/>
</dbReference>
<dbReference type="SUPFAM" id="SSF144074">
    <property type="entry name" value="E2F-DP heterodimerization region"/>
    <property type="match status" value="1"/>
</dbReference>
<dbReference type="SUPFAM" id="SSF46785">
    <property type="entry name" value="Winged helix' DNA-binding domain"/>
    <property type="match status" value="1"/>
</dbReference>
<comment type="function">
    <text evidence="2">Can stimulate E2F-dependent transcription. Binds DNA cooperatively with E2F family members through the E2 recognition site, 5'-TTTC[CG]CGC-3', found in the promoter region of a number of genes whose products are involved in cell cycle regulation or in DNA replication. The E2F1:DP complex appears to mediate both cell proliferation and apoptosis. Blocks adipocyte differentiation by repressing CEBPA binding to its target gene promoters (By similarity).</text>
</comment>
<comment type="subunit">
    <text evidence="2">Component of the E2F:DP transcription factor complex. Forms heterodimers with E2F family members. The complex can interact with hypophosphorylated retinoblastoma protein RB1 and related proteins (RBL1 and RBL2) that inhibit the E2F transactivation domain. This repression involves recruitment of histone deacetylase (HDAC). During the cell cycle, from mid-to-late G1 phase, RB family members become phosphorylated, detach from the DRTF1/E2F complex to render E2F transcriptionally active. Part of the E2F6.com-1 complex in G0 phase is composed of E2F6, MGA, MAX, TFDP1, CBX3, BAT8, EUHMTASE1, RING1, RNF2, MBLR, L3MBTL2 YAF2. Component of the DREAM complex (also named LINC complex) at least composed of E2F4, E2F5, LIN9, LIN37, LIN52, LIN54, MYBL1, MYBL2, RBL1, RBL2, RBBP4, TFDP1 and TFDP2. The complex exists in quiescent cells where it represses cell cycle-dependent genes. It dissociates in S phase when LIN9, LIN37, LIN52 and LIN54 form a subcomplex that binds to MYBL2. The complex TFDP1:E2F1 interacts with CEBPA; the interaction prevents CEBPA binding to target gene promoters and represses its transcriptional activity (By similarity).</text>
</comment>
<comment type="subcellular location">
    <subcellularLocation>
        <location evidence="1">Nucleus</location>
    </subcellularLocation>
    <subcellularLocation>
        <location evidence="1">Cytoplasm</location>
    </subcellularLocation>
    <text evidence="1">Shuttles between the cytoplasm and nucleus and translocates into the nuclear compartment upon heterodimerization with E2F1.</text>
</comment>
<comment type="PTM">
    <text evidence="1">Ubiquitinated by the BCR(KBTBD5) complex, leading to its subsequent degradation.</text>
</comment>
<comment type="PTM">
    <text evidence="2">Phosphorylation by E2F1-bound cyclin A-CDK2, in the S phase, inhibits E2F-mediated DNA binding and transactivation.</text>
</comment>
<comment type="similarity">
    <text evidence="5">Belongs to the E2F/DP family.</text>
</comment>
<gene>
    <name type="primary">TFDP1</name>
</gene>
<keyword id="KW-0007">Acetylation</keyword>
<keyword id="KW-0010">Activator</keyword>
<keyword id="KW-0131">Cell cycle</keyword>
<keyword id="KW-0963">Cytoplasm</keyword>
<keyword id="KW-0238">DNA-binding</keyword>
<keyword id="KW-0539">Nucleus</keyword>
<keyword id="KW-0597">Phosphoprotein</keyword>
<keyword id="KW-1185">Reference proteome</keyword>
<keyword id="KW-0804">Transcription</keyword>
<keyword id="KW-0805">Transcription regulation</keyword>
<keyword id="KW-0832">Ubl conjugation</keyword>
<organism>
    <name type="scientific">Bos taurus</name>
    <name type="common">Bovine</name>
    <dbReference type="NCBI Taxonomy" id="9913"/>
    <lineage>
        <taxon>Eukaryota</taxon>
        <taxon>Metazoa</taxon>
        <taxon>Chordata</taxon>
        <taxon>Craniata</taxon>
        <taxon>Vertebrata</taxon>
        <taxon>Euteleostomi</taxon>
        <taxon>Mammalia</taxon>
        <taxon>Eutheria</taxon>
        <taxon>Laurasiatheria</taxon>
        <taxon>Artiodactyla</taxon>
        <taxon>Ruminantia</taxon>
        <taxon>Pecora</taxon>
        <taxon>Bovidae</taxon>
        <taxon>Bovinae</taxon>
        <taxon>Bos</taxon>
    </lineage>
</organism>
<protein>
    <recommendedName>
        <fullName>Transcription factor Dp-1</fullName>
    </recommendedName>
</protein>
<reference key="1">
    <citation type="submission" date="2006-06" db="EMBL/GenBank/DDBJ databases">
        <authorList>
            <consortium name="NIH - Mammalian Gene Collection (MGC) project"/>
        </authorList>
    </citation>
    <scope>NUCLEOTIDE SEQUENCE [LARGE SCALE MRNA]</scope>
    <source>
        <strain>Hereford</strain>
        <tissue>Uterus</tissue>
    </source>
</reference>
<accession>Q17QZ4</accession>